<feature type="chain" id="PRO_1000073947" description="Adenylosuccinate synthetase">
    <location>
        <begin position="1"/>
        <end position="431"/>
    </location>
</feature>
<feature type="active site" description="Proton acceptor" evidence="1">
    <location>
        <position position="13"/>
    </location>
</feature>
<feature type="active site" description="Proton donor" evidence="1">
    <location>
        <position position="41"/>
    </location>
</feature>
<feature type="binding site" evidence="1">
    <location>
        <begin position="12"/>
        <end position="18"/>
    </location>
    <ligand>
        <name>GTP</name>
        <dbReference type="ChEBI" id="CHEBI:37565"/>
    </ligand>
</feature>
<feature type="binding site" description="in other chain" evidence="1">
    <location>
        <begin position="13"/>
        <end position="16"/>
    </location>
    <ligand>
        <name>IMP</name>
        <dbReference type="ChEBI" id="CHEBI:58053"/>
        <note>ligand shared between dimeric partners</note>
    </ligand>
</feature>
<feature type="binding site" evidence="1">
    <location>
        <position position="13"/>
    </location>
    <ligand>
        <name>Mg(2+)</name>
        <dbReference type="ChEBI" id="CHEBI:18420"/>
    </ligand>
</feature>
<feature type="binding site" description="in other chain" evidence="1">
    <location>
        <begin position="38"/>
        <end position="41"/>
    </location>
    <ligand>
        <name>IMP</name>
        <dbReference type="ChEBI" id="CHEBI:58053"/>
        <note>ligand shared between dimeric partners</note>
    </ligand>
</feature>
<feature type="binding site" evidence="1">
    <location>
        <begin position="40"/>
        <end position="42"/>
    </location>
    <ligand>
        <name>GTP</name>
        <dbReference type="ChEBI" id="CHEBI:37565"/>
    </ligand>
</feature>
<feature type="binding site" evidence="1">
    <location>
        <position position="40"/>
    </location>
    <ligand>
        <name>Mg(2+)</name>
        <dbReference type="ChEBI" id="CHEBI:18420"/>
    </ligand>
</feature>
<feature type="binding site" description="in other chain" evidence="1">
    <location>
        <position position="130"/>
    </location>
    <ligand>
        <name>IMP</name>
        <dbReference type="ChEBI" id="CHEBI:58053"/>
        <note>ligand shared between dimeric partners</note>
    </ligand>
</feature>
<feature type="binding site" evidence="1">
    <location>
        <position position="144"/>
    </location>
    <ligand>
        <name>IMP</name>
        <dbReference type="ChEBI" id="CHEBI:58053"/>
        <note>ligand shared between dimeric partners</note>
    </ligand>
</feature>
<feature type="binding site" description="in other chain" evidence="1">
    <location>
        <position position="225"/>
    </location>
    <ligand>
        <name>IMP</name>
        <dbReference type="ChEBI" id="CHEBI:58053"/>
        <note>ligand shared between dimeric partners</note>
    </ligand>
</feature>
<feature type="binding site" description="in other chain" evidence="1">
    <location>
        <position position="240"/>
    </location>
    <ligand>
        <name>IMP</name>
        <dbReference type="ChEBI" id="CHEBI:58053"/>
        <note>ligand shared between dimeric partners</note>
    </ligand>
</feature>
<feature type="binding site" evidence="1">
    <location>
        <begin position="300"/>
        <end position="306"/>
    </location>
    <ligand>
        <name>substrate</name>
    </ligand>
</feature>
<feature type="binding site" description="in other chain" evidence="1">
    <location>
        <position position="304"/>
    </location>
    <ligand>
        <name>IMP</name>
        <dbReference type="ChEBI" id="CHEBI:58053"/>
        <note>ligand shared between dimeric partners</note>
    </ligand>
</feature>
<feature type="binding site" evidence="1">
    <location>
        <position position="306"/>
    </location>
    <ligand>
        <name>GTP</name>
        <dbReference type="ChEBI" id="CHEBI:37565"/>
    </ligand>
</feature>
<feature type="binding site" evidence="1">
    <location>
        <begin position="332"/>
        <end position="334"/>
    </location>
    <ligand>
        <name>GTP</name>
        <dbReference type="ChEBI" id="CHEBI:37565"/>
    </ligand>
</feature>
<feature type="binding site" evidence="1">
    <location>
        <begin position="414"/>
        <end position="416"/>
    </location>
    <ligand>
        <name>GTP</name>
        <dbReference type="ChEBI" id="CHEBI:37565"/>
    </ligand>
</feature>
<reference key="1">
    <citation type="submission" date="2007-05" db="EMBL/GenBank/DDBJ databases">
        <title>Complete sequence of Geobacter uraniireducens Rf4.</title>
        <authorList>
            <consortium name="US DOE Joint Genome Institute"/>
            <person name="Copeland A."/>
            <person name="Lucas S."/>
            <person name="Lapidus A."/>
            <person name="Barry K."/>
            <person name="Detter J.C."/>
            <person name="Glavina del Rio T."/>
            <person name="Hammon N."/>
            <person name="Israni S."/>
            <person name="Dalin E."/>
            <person name="Tice H."/>
            <person name="Pitluck S."/>
            <person name="Chertkov O."/>
            <person name="Brettin T."/>
            <person name="Bruce D."/>
            <person name="Han C."/>
            <person name="Schmutz J."/>
            <person name="Larimer F."/>
            <person name="Land M."/>
            <person name="Hauser L."/>
            <person name="Kyrpides N."/>
            <person name="Mikhailova N."/>
            <person name="Shelobolina E."/>
            <person name="Aklujkar M."/>
            <person name="Lovley D."/>
            <person name="Richardson P."/>
        </authorList>
    </citation>
    <scope>NUCLEOTIDE SEQUENCE [LARGE SCALE GENOMIC DNA]</scope>
    <source>
        <strain>ATCC BAA-1134 / JCM 13001 / Rf4</strain>
    </source>
</reference>
<accession>A5GC19</accession>
<sequence length="431" mass="47573">MANVVVVGAQWGDEGKGKVVDIYTEFADDVVRYQGGNNAGHTLVVGDEKIVLHLIPSGILHQGKRCIIGNGVVLDPEVFIREITNLKAKGKFQDDGVLLLSESLHIIMPYHKRIDIAREANSGAKKIGTTGRGIGPAYEDKIGRRGIRLMDLLDKQVFSRKLKEFLEEKNFILEKLLGERPFTFEEIFDEYSAYADTLRNYVADTTLVLHQDLKAGKKLLFEGAQGTLLDVDHGTYPYVTSSSTCAGGACTGTGASPRDINEIIGISKAYVTRVGSGPFPTELEDADGEKLRHTGGEFGATTGRPRRCGWFDALVIKYAVRVNGLTGIALTKLDVLSDFESIKICTGYSYNDKFLNELPANLDVFEKCRPVYEEMPGWQSDITGVRSFEELPEKAKNYVKRLEELAGCPIVLVSVGPRRDETIMLKNPFEA</sequence>
<protein>
    <recommendedName>
        <fullName evidence="1">Adenylosuccinate synthetase</fullName>
        <shortName evidence="1">AMPSase</shortName>
        <shortName evidence="1">AdSS</shortName>
        <ecNumber evidence="1">6.3.4.4</ecNumber>
    </recommendedName>
    <alternativeName>
        <fullName evidence="1">IMP--aspartate ligase</fullName>
    </alternativeName>
</protein>
<evidence type="ECO:0000255" key="1">
    <source>
        <dbReference type="HAMAP-Rule" id="MF_00011"/>
    </source>
</evidence>
<dbReference type="EC" id="6.3.4.4" evidence="1"/>
<dbReference type="EMBL" id="CP000698">
    <property type="protein sequence ID" value="ABQ24874.1"/>
    <property type="molecule type" value="Genomic_DNA"/>
</dbReference>
<dbReference type="RefSeq" id="WP_011937598.1">
    <property type="nucleotide sequence ID" value="NC_009483.1"/>
</dbReference>
<dbReference type="SMR" id="A5GC19"/>
<dbReference type="STRING" id="351605.Gura_0662"/>
<dbReference type="KEGG" id="gur:Gura_0662"/>
<dbReference type="HOGENOM" id="CLU_029848_0_0_7"/>
<dbReference type="OrthoDB" id="9807553at2"/>
<dbReference type="UniPathway" id="UPA00075">
    <property type="reaction ID" value="UER00335"/>
</dbReference>
<dbReference type="Proteomes" id="UP000006695">
    <property type="component" value="Chromosome"/>
</dbReference>
<dbReference type="GO" id="GO:0005737">
    <property type="term" value="C:cytoplasm"/>
    <property type="evidence" value="ECO:0007669"/>
    <property type="project" value="UniProtKB-SubCell"/>
</dbReference>
<dbReference type="GO" id="GO:0004019">
    <property type="term" value="F:adenylosuccinate synthase activity"/>
    <property type="evidence" value="ECO:0007669"/>
    <property type="project" value="UniProtKB-UniRule"/>
</dbReference>
<dbReference type="GO" id="GO:0005525">
    <property type="term" value="F:GTP binding"/>
    <property type="evidence" value="ECO:0007669"/>
    <property type="project" value="UniProtKB-UniRule"/>
</dbReference>
<dbReference type="GO" id="GO:0000287">
    <property type="term" value="F:magnesium ion binding"/>
    <property type="evidence" value="ECO:0007669"/>
    <property type="project" value="UniProtKB-UniRule"/>
</dbReference>
<dbReference type="GO" id="GO:0044208">
    <property type="term" value="P:'de novo' AMP biosynthetic process"/>
    <property type="evidence" value="ECO:0007669"/>
    <property type="project" value="UniProtKB-UniRule"/>
</dbReference>
<dbReference type="GO" id="GO:0046040">
    <property type="term" value="P:IMP metabolic process"/>
    <property type="evidence" value="ECO:0007669"/>
    <property type="project" value="TreeGrafter"/>
</dbReference>
<dbReference type="CDD" id="cd03108">
    <property type="entry name" value="AdSS"/>
    <property type="match status" value="1"/>
</dbReference>
<dbReference type="FunFam" id="1.10.300.10:FF:000001">
    <property type="entry name" value="Adenylosuccinate synthetase"/>
    <property type="match status" value="1"/>
</dbReference>
<dbReference type="FunFam" id="3.90.170.10:FF:000001">
    <property type="entry name" value="Adenylosuccinate synthetase"/>
    <property type="match status" value="1"/>
</dbReference>
<dbReference type="Gene3D" id="3.40.440.10">
    <property type="entry name" value="Adenylosuccinate Synthetase, subunit A, domain 1"/>
    <property type="match status" value="1"/>
</dbReference>
<dbReference type="Gene3D" id="1.10.300.10">
    <property type="entry name" value="Adenylosuccinate Synthetase, subunit A, domain 2"/>
    <property type="match status" value="1"/>
</dbReference>
<dbReference type="Gene3D" id="3.90.170.10">
    <property type="entry name" value="Adenylosuccinate Synthetase, subunit A, domain 3"/>
    <property type="match status" value="1"/>
</dbReference>
<dbReference type="HAMAP" id="MF_00011">
    <property type="entry name" value="Adenylosucc_synth"/>
    <property type="match status" value="1"/>
</dbReference>
<dbReference type="InterPro" id="IPR018220">
    <property type="entry name" value="Adenylosuccin_syn_GTP-bd"/>
</dbReference>
<dbReference type="InterPro" id="IPR033128">
    <property type="entry name" value="Adenylosuccin_syn_Lys_AS"/>
</dbReference>
<dbReference type="InterPro" id="IPR042109">
    <property type="entry name" value="Adenylosuccinate_synth_dom1"/>
</dbReference>
<dbReference type="InterPro" id="IPR042110">
    <property type="entry name" value="Adenylosuccinate_synth_dom2"/>
</dbReference>
<dbReference type="InterPro" id="IPR042111">
    <property type="entry name" value="Adenylosuccinate_synth_dom3"/>
</dbReference>
<dbReference type="InterPro" id="IPR001114">
    <property type="entry name" value="Adenylosuccinate_synthetase"/>
</dbReference>
<dbReference type="InterPro" id="IPR027417">
    <property type="entry name" value="P-loop_NTPase"/>
</dbReference>
<dbReference type="NCBIfam" id="NF002223">
    <property type="entry name" value="PRK01117.1"/>
    <property type="match status" value="1"/>
</dbReference>
<dbReference type="NCBIfam" id="TIGR00184">
    <property type="entry name" value="purA"/>
    <property type="match status" value="1"/>
</dbReference>
<dbReference type="PANTHER" id="PTHR11846">
    <property type="entry name" value="ADENYLOSUCCINATE SYNTHETASE"/>
    <property type="match status" value="1"/>
</dbReference>
<dbReference type="PANTHER" id="PTHR11846:SF0">
    <property type="entry name" value="ADENYLOSUCCINATE SYNTHETASE"/>
    <property type="match status" value="1"/>
</dbReference>
<dbReference type="Pfam" id="PF00709">
    <property type="entry name" value="Adenylsucc_synt"/>
    <property type="match status" value="1"/>
</dbReference>
<dbReference type="SMART" id="SM00788">
    <property type="entry name" value="Adenylsucc_synt"/>
    <property type="match status" value="1"/>
</dbReference>
<dbReference type="SUPFAM" id="SSF52540">
    <property type="entry name" value="P-loop containing nucleoside triphosphate hydrolases"/>
    <property type="match status" value="1"/>
</dbReference>
<dbReference type="PROSITE" id="PS01266">
    <property type="entry name" value="ADENYLOSUCCIN_SYN_1"/>
    <property type="match status" value="1"/>
</dbReference>
<dbReference type="PROSITE" id="PS00513">
    <property type="entry name" value="ADENYLOSUCCIN_SYN_2"/>
    <property type="match status" value="1"/>
</dbReference>
<comment type="function">
    <text evidence="1">Plays an important role in the de novo pathway of purine nucleotide biosynthesis. Catalyzes the first committed step in the biosynthesis of AMP from IMP.</text>
</comment>
<comment type="catalytic activity">
    <reaction evidence="1">
        <text>IMP + L-aspartate + GTP = N(6)-(1,2-dicarboxyethyl)-AMP + GDP + phosphate + 2 H(+)</text>
        <dbReference type="Rhea" id="RHEA:15753"/>
        <dbReference type="ChEBI" id="CHEBI:15378"/>
        <dbReference type="ChEBI" id="CHEBI:29991"/>
        <dbReference type="ChEBI" id="CHEBI:37565"/>
        <dbReference type="ChEBI" id="CHEBI:43474"/>
        <dbReference type="ChEBI" id="CHEBI:57567"/>
        <dbReference type="ChEBI" id="CHEBI:58053"/>
        <dbReference type="ChEBI" id="CHEBI:58189"/>
        <dbReference type="EC" id="6.3.4.4"/>
    </reaction>
</comment>
<comment type="cofactor">
    <cofactor evidence="1">
        <name>Mg(2+)</name>
        <dbReference type="ChEBI" id="CHEBI:18420"/>
    </cofactor>
    <text evidence="1">Binds 1 Mg(2+) ion per subunit.</text>
</comment>
<comment type="pathway">
    <text evidence="1">Purine metabolism; AMP biosynthesis via de novo pathway; AMP from IMP: step 1/2.</text>
</comment>
<comment type="subunit">
    <text evidence="1">Homodimer.</text>
</comment>
<comment type="subcellular location">
    <subcellularLocation>
        <location evidence="1">Cytoplasm</location>
    </subcellularLocation>
</comment>
<comment type="similarity">
    <text evidence="1">Belongs to the adenylosuccinate synthetase family.</text>
</comment>
<gene>
    <name evidence="1" type="primary">purA</name>
    <name type="ordered locus">Gura_0662</name>
</gene>
<proteinExistence type="inferred from homology"/>
<organism>
    <name type="scientific">Geotalea uraniireducens (strain Rf4)</name>
    <name type="common">Geobacter uraniireducens</name>
    <dbReference type="NCBI Taxonomy" id="351605"/>
    <lineage>
        <taxon>Bacteria</taxon>
        <taxon>Pseudomonadati</taxon>
        <taxon>Thermodesulfobacteriota</taxon>
        <taxon>Desulfuromonadia</taxon>
        <taxon>Geobacterales</taxon>
        <taxon>Geobacteraceae</taxon>
        <taxon>Geotalea</taxon>
    </lineage>
</organism>
<name>PURA_GEOUR</name>
<keyword id="KW-0963">Cytoplasm</keyword>
<keyword id="KW-0342">GTP-binding</keyword>
<keyword id="KW-0436">Ligase</keyword>
<keyword id="KW-0460">Magnesium</keyword>
<keyword id="KW-0479">Metal-binding</keyword>
<keyword id="KW-0547">Nucleotide-binding</keyword>
<keyword id="KW-0658">Purine biosynthesis</keyword>
<keyword id="KW-1185">Reference proteome</keyword>